<feature type="chain" id="PRO_1000092280" description="Phosphoheptose isomerase">
    <location>
        <begin position="1"/>
        <end position="195"/>
    </location>
</feature>
<feature type="domain" description="SIS" evidence="1">
    <location>
        <begin position="36"/>
        <end position="195"/>
    </location>
</feature>
<feature type="binding site" evidence="1">
    <location>
        <begin position="51"/>
        <end position="53"/>
    </location>
    <ligand>
        <name>substrate</name>
    </ligand>
</feature>
<feature type="binding site" evidence="1">
    <location>
        <position position="60"/>
    </location>
    <ligand>
        <name>Zn(2+)</name>
        <dbReference type="ChEBI" id="CHEBI:29105"/>
    </ligand>
</feature>
<feature type="binding site" evidence="1">
    <location>
        <position position="64"/>
    </location>
    <ligand>
        <name>substrate</name>
    </ligand>
</feature>
<feature type="binding site" evidence="1">
    <location>
        <position position="64"/>
    </location>
    <ligand>
        <name>Zn(2+)</name>
        <dbReference type="ChEBI" id="CHEBI:29105"/>
    </ligand>
</feature>
<feature type="binding site" evidence="1">
    <location>
        <begin position="95"/>
        <end position="96"/>
    </location>
    <ligand>
        <name>substrate</name>
    </ligand>
</feature>
<feature type="binding site" evidence="1">
    <location>
        <begin position="121"/>
        <end position="123"/>
    </location>
    <ligand>
        <name>substrate</name>
    </ligand>
</feature>
<feature type="binding site" evidence="1">
    <location>
        <position position="126"/>
    </location>
    <ligand>
        <name>substrate</name>
    </ligand>
</feature>
<feature type="binding site" evidence="1">
    <location>
        <position position="173"/>
    </location>
    <ligand>
        <name>substrate</name>
    </ligand>
</feature>
<feature type="binding site" evidence="1">
    <location>
        <position position="173"/>
    </location>
    <ligand>
        <name>Zn(2+)</name>
        <dbReference type="ChEBI" id="CHEBI:29105"/>
    </ligand>
</feature>
<feature type="binding site" evidence="1">
    <location>
        <position position="181"/>
    </location>
    <ligand>
        <name>Zn(2+)</name>
        <dbReference type="ChEBI" id="CHEBI:29105"/>
    </ligand>
</feature>
<gene>
    <name evidence="1" type="primary">gmhA</name>
    <name type="ordered locus">LEPBI_I1621</name>
</gene>
<sequence length="195" mass="20850">MEHDTLIQSQIEDSIRVKAQLLPSLLPNIKAAGKVLVDSLKGDGILYFAGNGGSSCDASHIAAELVIRYKSGNERKAIPAIALNSDQAVLTACANDYGYEFLFQRQLQAFGKSKDVFIGLTTSGNSKNIILAVEEAKKNGMKVVLLLGGDGGKLKGKADVEIIIPSSVTARIQESHILIGHILCSIIEKELFGLD</sequence>
<keyword id="KW-0119">Carbohydrate metabolism</keyword>
<keyword id="KW-0963">Cytoplasm</keyword>
<keyword id="KW-0413">Isomerase</keyword>
<keyword id="KW-0479">Metal-binding</keyword>
<keyword id="KW-1185">Reference proteome</keyword>
<keyword id="KW-0862">Zinc</keyword>
<name>GMHA_LEPBP</name>
<reference key="1">
    <citation type="journal article" date="2008" name="PLoS ONE">
        <title>Genome sequence of the saprophyte Leptospira biflexa provides insights into the evolution of Leptospira and the pathogenesis of leptospirosis.</title>
        <authorList>
            <person name="Picardeau M."/>
            <person name="Bulach D.M."/>
            <person name="Bouchier C."/>
            <person name="Zuerner R.L."/>
            <person name="Zidane N."/>
            <person name="Wilson P.J."/>
            <person name="Creno S."/>
            <person name="Kuczek E.S."/>
            <person name="Bommezzadri S."/>
            <person name="Davis J.C."/>
            <person name="McGrath A."/>
            <person name="Johnson M.J."/>
            <person name="Boursaux-Eude C."/>
            <person name="Seemann T."/>
            <person name="Rouy Z."/>
            <person name="Coppel R.L."/>
            <person name="Rood J.I."/>
            <person name="Lajus A."/>
            <person name="Davies J.K."/>
            <person name="Medigue C."/>
            <person name="Adler B."/>
        </authorList>
    </citation>
    <scope>NUCLEOTIDE SEQUENCE [LARGE SCALE GENOMIC DNA]</scope>
    <source>
        <strain>Patoc 1 / ATCC 23582 / Paris</strain>
    </source>
</reference>
<protein>
    <recommendedName>
        <fullName evidence="1">Phosphoheptose isomerase</fullName>
        <ecNumber evidence="1">5.3.1.28</ecNumber>
    </recommendedName>
    <alternativeName>
        <fullName evidence="1">Sedoheptulose 7-phosphate isomerase</fullName>
    </alternativeName>
</protein>
<evidence type="ECO:0000255" key="1">
    <source>
        <dbReference type="HAMAP-Rule" id="MF_00067"/>
    </source>
</evidence>
<dbReference type="EC" id="5.3.1.28" evidence="1"/>
<dbReference type="EMBL" id="CP000786">
    <property type="protein sequence ID" value="ABZ97728.1"/>
    <property type="molecule type" value="Genomic_DNA"/>
</dbReference>
<dbReference type="RefSeq" id="WP_012388606.1">
    <property type="nucleotide sequence ID" value="NC_010602.1"/>
</dbReference>
<dbReference type="SMR" id="B0SR27"/>
<dbReference type="STRING" id="456481.LEPBI_I1621"/>
<dbReference type="KEGG" id="lbi:LEPBI_I1621"/>
<dbReference type="HOGENOM" id="CLU_080999_4_0_12"/>
<dbReference type="OrthoDB" id="9781311at2"/>
<dbReference type="BioCyc" id="LBIF456481:LEPBI_RS08005-MONOMER"/>
<dbReference type="UniPathway" id="UPA00041">
    <property type="reaction ID" value="UER00436"/>
</dbReference>
<dbReference type="Proteomes" id="UP000001847">
    <property type="component" value="Chromosome I"/>
</dbReference>
<dbReference type="GO" id="GO:0005737">
    <property type="term" value="C:cytoplasm"/>
    <property type="evidence" value="ECO:0007669"/>
    <property type="project" value="UniProtKB-SubCell"/>
</dbReference>
<dbReference type="GO" id="GO:0097367">
    <property type="term" value="F:carbohydrate derivative binding"/>
    <property type="evidence" value="ECO:0007669"/>
    <property type="project" value="InterPro"/>
</dbReference>
<dbReference type="GO" id="GO:0008968">
    <property type="term" value="F:D-sedoheptulose 7-phosphate isomerase activity"/>
    <property type="evidence" value="ECO:0007669"/>
    <property type="project" value="UniProtKB-UniRule"/>
</dbReference>
<dbReference type="GO" id="GO:0008270">
    <property type="term" value="F:zinc ion binding"/>
    <property type="evidence" value="ECO:0007669"/>
    <property type="project" value="UniProtKB-UniRule"/>
</dbReference>
<dbReference type="GO" id="GO:0005975">
    <property type="term" value="P:carbohydrate metabolic process"/>
    <property type="evidence" value="ECO:0007669"/>
    <property type="project" value="UniProtKB-UniRule"/>
</dbReference>
<dbReference type="GO" id="GO:2001061">
    <property type="term" value="P:D-glycero-D-manno-heptose 7-phosphate biosynthetic process"/>
    <property type="evidence" value="ECO:0007669"/>
    <property type="project" value="UniProtKB-UniPathway"/>
</dbReference>
<dbReference type="CDD" id="cd05006">
    <property type="entry name" value="SIS_GmhA"/>
    <property type="match status" value="1"/>
</dbReference>
<dbReference type="Gene3D" id="3.40.50.10490">
    <property type="entry name" value="Glucose-6-phosphate isomerase like protein, domain 1"/>
    <property type="match status" value="1"/>
</dbReference>
<dbReference type="HAMAP" id="MF_00067">
    <property type="entry name" value="GmhA"/>
    <property type="match status" value="1"/>
</dbReference>
<dbReference type="InterPro" id="IPR035461">
    <property type="entry name" value="GmhA/DiaA"/>
</dbReference>
<dbReference type="InterPro" id="IPR004515">
    <property type="entry name" value="Phosphoheptose_Isoase"/>
</dbReference>
<dbReference type="InterPro" id="IPR001347">
    <property type="entry name" value="SIS_dom"/>
</dbReference>
<dbReference type="InterPro" id="IPR046348">
    <property type="entry name" value="SIS_dom_sf"/>
</dbReference>
<dbReference type="InterPro" id="IPR050099">
    <property type="entry name" value="SIS_GmhA/DiaA_subfam"/>
</dbReference>
<dbReference type="PANTHER" id="PTHR30390:SF6">
    <property type="entry name" value="DNAA INITIATOR-ASSOCIATING PROTEIN DIAA"/>
    <property type="match status" value="1"/>
</dbReference>
<dbReference type="PANTHER" id="PTHR30390">
    <property type="entry name" value="SEDOHEPTULOSE 7-PHOSPHATE ISOMERASE / DNAA INITIATOR-ASSOCIATING FACTOR FOR REPLICATION INITIATION"/>
    <property type="match status" value="1"/>
</dbReference>
<dbReference type="Pfam" id="PF13580">
    <property type="entry name" value="SIS_2"/>
    <property type="match status" value="1"/>
</dbReference>
<dbReference type="SUPFAM" id="SSF53697">
    <property type="entry name" value="SIS domain"/>
    <property type="match status" value="1"/>
</dbReference>
<dbReference type="PROSITE" id="PS51464">
    <property type="entry name" value="SIS"/>
    <property type="match status" value="1"/>
</dbReference>
<accession>B0SR27</accession>
<organism>
    <name type="scientific">Leptospira biflexa serovar Patoc (strain Patoc 1 / ATCC 23582 / Paris)</name>
    <dbReference type="NCBI Taxonomy" id="456481"/>
    <lineage>
        <taxon>Bacteria</taxon>
        <taxon>Pseudomonadati</taxon>
        <taxon>Spirochaetota</taxon>
        <taxon>Spirochaetia</taxon>
        <taxon>Leptospirales</taxon>
        <taxon>Leptospiraceae</taxon>
        <taxon>Leptospira</taxon>
    </lineage>
</organism>
<proteinExistence type="inferred from homology"/>
<comment type="function">
    <text evidence="1">Catalyzes the isomerization of sedoheptulose 7-phosphate in D-glycero-D-manno-heptose 7-phosphate.</text>
</comment>
<comment type="catalytic activity">
    <reaction evidence="1">
        <text>2 D-sedoheptulose 7-phosphate = D-glycero-alpha-D-manno-heptose 7-phosphate + D-glycero-beta-D-manno-heptose 7-phosphate</text>
        <dbReference type="Rhea" id="RHEA:27489"/>
        <dbReference type="ChEBI" id="CHEBI:57483"/>
        <dbReference type="ChEBI" id="CHEBI:60203"/>
        <dbReference type="ChEBI" id="CHEBI:60204"/>
        <dbReference type="EC" id="5.3.1.28"/>
    </reaction>
</comment>
<comment type="cofactor">
    <cofactor evidence="1">
        <name>Zn(2+)</name>
        <dbReference type="ChEBI" id="CHEBI:29105"/>
    </cofactor>
    <text evidence="1">Binds 1 zinc ion per subunit.</text>
</comment>
<comment type="pathway">
    <text evidence="1">Carbohydrate biosynthesis; D-glycero-D-manno-heptose 7-phosphate biosynthesis; D-glycero-alpha-D-manno-heptose 7-phosphate and D-glycero-beta-D-manno-heptose 7-phosphate from sedoheptulose 7-phosphate: step 1/1.</text>
</comment>
<comment type="subcellular location">
    <subcellularLocation>
        <location evidence="1">Cytoplasm</location>
    </subcellularLocation>
</comment>
<comment type="miscellaneous">
    <text evidence="1">The reaction produces a racemic mixture of D-glycero-alpha-D-manno-heptose 7-phosphate and D-glycero-beta-D-manno-heptose 7-phosphate.</text>
</comment>
<comment type="similarity">
    <text evidence="1">Belongs to the SIS family. GmhA subfamily.</text>
</comment>